<comment type="function">
    <text evidence="2 3">Microtubule inner protein (MIP) part of the dynein-decorated doublet microtubules (DMTs) in cilia axoneme, which is required for motile cilia beating (PubMed:37295417, PubMed:37989994). Binds to the intra-tubulin interfaces (PubMed:37295417).</text>
</comment>
<comment type="subunit">
    <text evidence="2 3">Microtubule inner protein component of sperm flagellar doublet microtubules.</text>
</comment>
<comment type="subcellular location">
    <subcellularLocation>
        <location evidence="1">Cytoplasm</location>
        <location evidence="1">Cytoskeleton</location>
        <location evidence="1">Cilium axoneme</location>
    </subcellularLocation>
    <subcellularLocation>
        <location evidence="2 3">Cytoplasm</location>
        <location evidence="2 3">Cytoskeleton</location>
        <location evidence="2 3">Flagellum axoneme</location>
    </subcellularLocation>
</comment>
<comment type="alternative products">
    <event type="alternative splicing"/>
    <isoform>
        <id>Q9DAS2-1</id>
        <name>1</name>
        <sequence type="displayed"/>
    </isoform>
    <isoform>
        <id>Q9DAS2-2</id>
        <name>2</name>
        <sequence type="described" ref="VSP_033372 VSP_033373"/>
    </isoform>
</comment>
<comment type="similarity">
    <text evidence="6">Belongs to the CIMIP2 family.</text>
</comment>
<sequence length="200" mass="23070">MAFRSAGTLMTEFNAAFVPPALMPGYKGHVPGVASSFGSSYGNTTFKYFQDLRNTGLEKSYALLSGGCFPTIFSPNSPLVLTDNSQNWDRWLHQPTYSRSNQDNGRTTELTNFYKTVQQQRKYYQDKTGILSRVPYFVLPVKEPDRYPLPTDLPPLSEKSKWNLLRLSPDYKRTYQTFPSGKRVSSQERQRRDLYFEFRA</sequence>
<accession>Q9DAS2</accession>
<accession>Q9D9M8</accession>
<reference key="1">
    <citation type="journal article" date="2005" name="Science">
        <title>The transcriptional landscape of the mammalian genome.</title>
        <authorList>
            <person name="Carninci P."/>
            <person name="Kasukawa T."/>
            <person name="Katayama S."/>
            <person name="Gough J."/>
            <person name="Frith M.C."/>
            <person name="Maeda N."/>
            <person name="Oyama R."/>
            <person name="Ravasi T."/>
            <person name="Lenhard B."/>
            <person name="Wells C."/>
            <person name="Kodzius R."/>
            <person name="Shimokawa K."/>
            <person name="Bajic V.B."/>
            <person name="Brenner S.E."/>
            <person name="Batalov S."/>
            <person name="Forrest A.R."/>
            <person name="Zavolan M."/>
            <person name="Davis M.J."/>
            <person name="Wilming L.G."/>
            <person name="Aidinis V."/>
            <person name="Allen J.E."/>
            <person name="Ambesi-Impiombato A."/>
            <person name="Apweiler R."/>
            <person name="Aturaliya R.N."/>
            <person name="Bailey T.L."/>
            <person name="Bansal M."/>
            <person name="Baxter L."/>
            <person name="Beisel K.W."/>
            <person name="Bersano T."/>
            <person name="Bono H."/>
            <person name="Chalk A.M."/>
            <person name="Chiu K.P."/>
            <person name="Choudhary V."/>
            <person name="Christoffels A."/>
            <person name="Clutterbuck D.R."/>
            <person name="Crowe M.L."/>
            <person name="Dalla E."/>
            <person name="Dalrymple B.P."/>
            <person name="de Bono B."/>
            <person name="Della Gatta G."/>
            <person name="di Bernardo D."/>
            <person name="Down T."/>
            <person name="Engstrom P."/>
            <person name="Fagiolini M."/>
            <person name="Faulkner G."/>
            <person name="Fletcher C.F."/>
            <person name="Fukushima T."/>
            <person name="Furuno M."/>
            <person name="Futaki S."/>
            <person name="Gariboldi M."/>
            <person name="Georgii-Hemming P."/>
            <person name="Gingeras T.R."/>
            <person name="Gojobori T."/>
            <person name="Green R.E."/>
            <person name="Gustincich S."/>
            <person name="Harbers M."/>
            <person name="Hayashi Y."/>
            <person name="Hensch T.K."/>
            <person name="Hirokawa N."/>
            <person name="Hill D."/>
            <person name="Huminiecki L."/>
            <person name="Iacono M."/>
            <person name="Ikeo K."/>
            <person name="Iwama A."/>
            <person name="Ishikawa T."/>
            <person name="Jakt M."/>
            <person name="Kanapin A."/>
            <person name="Katoh M."/>
            <person name="Kawasawa Y."/>
            <person name="Kelso J."/>
            <person name="Kitamura H."/>
            <person name="Kitano H."/>
            <person name="Kollias G."/>
            <person name="Krishnan S.P."/>
            <person name="Kruger A."/>
            <person name="Kummerfeld S.K."/>
            <person name="Kurochkin I.V."/>
            <person name="Lareau L.F."/>
            <person name="Lazarevic D."/>
            <person name="Lipovich L."/>
            <person name="Liu J."/>
            <person name="Liuni S."/>
            <person name="McWilliam S."/>
            <person name="Madan Babu M."/>
            <person name="Madera M."/>
            <person name="Marchionni L."/>
            <person name="Matsuda H."/>
            <person name="Matsuzawa S."/>
            <person name="Miki H."/>
            <person name="Mignone F."/>
            <person name="Miyake S."/>
            <person name="Morris K."/>
            <person name="Mottagui-Tabar S."/>
            <person name="Mulder N."/>
            <person name="Nakano N."/>
            <person name="Nakauchi H."/>
            <person name="Ng P."/>
            <person name="Nilsson R."/>
            <person name="Nishiguchi S."/>
            <person name="Nishikawa S."/>
            <person name="Nori F."/>
            <person name="Ohara O."/>
            <person name="Okazaki Y."/>
            <person name="Orlando V."/>
            <person name="Pang K.C."/>
            <person name="Pavan W.J."/>
            <person name="Pavesi G."/>
            <person name="Pesole G."/>
            <person name="Petrovsky N."/>
            <person name="Piazza S."/>
            <person name="Reed J."/>
            <person name="Reid J.F."/>
            <person name="Ring B.Z."/>
            <person name="Ringwald M."/>
            <person name="Rost B."/>
            <person name="Ruan Y."/>
            <person name="Salzberg S.L."/>
            <person name="Sandelin A."/>
            <person name="Schneider C."/>
            <person name="Schoenbach C."/>
            <person name="Sekiguchi K."/>
            <person name="Semple C.A."/>
            <person name="Seno S."/>
            <person name="Sessa L."/>
            <person name="Sheng Y."/>
            <person name="Shibata Y."/>
            <person name="Shimada H."/>
            <person name="Shimada K."/>
            <person name="Silva D."/>
            <person name="Sinclair B."/>
            <person name="Sperling S."/>
            <person name="Stupka E."/>
            <person name="Sugiura K."/>
            <person name="Sultana R."/>
            <person name="Takenaka Y."/>
            <person name="Taki K."/>
            <person name="Tammoja K."/>
            <person name="Tan S.L."/>
            <person name="Tang S."/>
            <person name="Taylor M.S."/>
            <person name="Tegner J."/>
            <person name="Teichmann S.A."/>
            <person name="Ueda H.R."/>
            <person name="van Nimwegen E."/>
            <person name="Verardo R."/>
            <person name="Wei C.L."/>
            <person name="Yagi K."/>
            <person name="Yamanishi H."/>
            <person name="Zabarovsky E."/>
            <person name="Zhu S."/>
            <person name="Zimmer A."/>
            <person name="Hide W."/>
            <person name="Bult C."/>
            <person name="Grimmond S.M."/>
            <person name="Teasdale R.D."/>
            <person name="Liu E.T."/>
            <person name="Brusic V."/>
            <person name="Quackenbush J."/>
            <person name="Wahlestedt C."/>
            <person name="Mattick J.S."/>
            <person name="Hume D.A."/>
            <person name="Kai C."/>
            <person name="Sasaki D."/>
            <person name="Tomaru Y."/>
            <person name="Fukuda S."/>
            <person name="Kanamori-Katayama M."/>
            <person name="Suzuki M."/>
            <person name="Aoki J."/>
            <person name="Arakawa T."/>
            <person name="Iida J."/>
            <person name="Imamura K."/>
            <person name="Itoh M."/>
            <person name="Kato T."/>
            <person name="Kawaji H."/>
            <person name="Kawagashira N."/>
            <person name="Kawashima T."/>
            <person name="Kojima M."/>
            <person name="Kondo S."/>
            <person name="Konno H."/>
            <person name="Nakano K."/>
            <person name="Ninomiya N."/>
            <person name="Nishio T."/>
            <person name="Okada M."/>
            <person name="Plessy C."/>
            <person name="Shibata K."/>
            <person name="Shiraki T."/>
            <person name="Suzuki S."/>
            <person name="Tagami M."/>
            <person name="Waki K."/>
            <person name="Watahiki A."/>
            <person name="Okamura-Oho Y."/>
            <person name="Suzuki H."/>
            <person name="Kawai J."/>
            <person name="Hayashizaki Y."/>
        </authorList>
    </citation>
    <scope>NUCLEOTIDE SEQUENCE [LARGE SCALE MRNA] (ISOFORMS 1 AND 2)</scope>
    <source>
        <strain>C57BL/6J</strain>
        <tissue>Testis</tissue>
    </source>
</reference>
<reference key="2">
    <citation type="journal article" date="2004" name="Genome Res.">
        <title>The status, quality, and expansion of the NIH full-length cDNA project: the Mammalian Gene Collection (MGC).</title>
        <authorList>
            <consortium name="The MGC Project Team"/>
        </authorList>
    </citation>
    <scope>NUCLEOTIDE SEQUENCE [LARGE SCALE MRNA] (ISOFORM 1)</scope>
    <source>
        <tissue>Testis</tissue>
    </source>
</reference>
<reference evidence="9" key="3">
    <citation type="journal article" date="2023" name="Cell">
        <title>Structures of sperm flagellar doublet microtubules expand the genetic spectrum of male infertility.</title>
        <authorList>
            <person name="Zhou L."/>
            <person name="Liu H."/>
            <person name="Liu S."/>
            <person name="Yang X."/>
            <person name="Dong Y."/>
            <person name="Pan Y."/>
            <person name="Xiao Z."/>
            <person name="Zheng B."/>
            <person name="Sun Y."/>
            <person name="Huang P."/>
            <person name="Zhang X."/>
            <person name="Hu J."/>
            <person name="Sun R."/>
            <person name="Feng S."/>
            <person name="Zhu Y."/>
            <person name="Liu M."/>
            <person name="Gui M."/>
            <person name="Wu J."/>
        </authorList>
    </citation>
    <scope>STRUCTURE BY ELECTRON MICROSCOPY (3.50 ANGSTROMS) OF SPERM FLAGELLAR DOUBLET MICROTUBULES</scope>
    <scope>FUNCTION</scope>
    <scope>SUBCELLULAR LOCATION</scope>
    <scope>SUBUNIT</scope>
</reference>
<reference evidence="7 8" key="4">
    <citation type="journal article" date="2023" name="Cell Discov.">
        <title>In-cell structural insight into the stability of sperm microtubule doublet.</title>
        <authorList>
            <person name="Tai L."/>
            <person name="Yin G."/>
            <person name="Huang X."/>
            <person name="Sun F."/>
            <person name="Zhu Y."/>
        </authorList>
    </citation>
    <scope>STRUCTURE BY ELECTRON MICROSCOPY (4.50 ANGSTROMS)</scope>
    <scope>FUNCTION</scope>
    <scope>SUBUNIT</scope>
    <scope>SUBCELLULAR LOCATION</scope>
</reference>
<gene>
    <name type="primary">Cimip2c</name>
    <name evidence="5" type="synonym">Fam166c</name>
</gene>
<proteinExistence type="evidence at protein level"/>
<dbReference type="EMBL" id="AK005574">
    <property type="protein sequence ID" value="BAB24132.1"/>
    <property type="molecule type" value="mRNA"/>
</dbReference>
<dbReference type="EMBL" id="AK006710">
    <property type="protein sequence ID" value="BAB24710.1"/>
    <property type="molecule type" value="mRNA"/>
</dbReference>
<dbReference type="EMBL" id="BC060996">
    <property type="protein sequence ID" value="AAH60996.1"/>
    <property type="molecule type" value="mRNA"/>
</dbReference>
<dbReference type="CCDS" id="CCDS19158.1">
    <molecule id="Q9DAS2-1"/>
</dbReference>
<dbReference type="RefSeq" id="NP_083561.1">
    <molecule id="Q9DAS2-1"/>
    <property type="nucleotide sequence ID" value="NM_029285.2"/>
</dbReference>
<dbReference type="PDB" id="8I7O">
    <property type="method" value="EM"/>
    <property type="resolution" value="4.50 A"/>
    <property type="chains" value="I2/I3=1-200"/>
</dbReference>
<dbReference type="PDB" id="8I7R">
    <property type="method" value="EM"/>
    <property type="resolution" value="6.50 A"/>
    <property type="chains" value="I1/I2/I3=1-200"/>
</dbReference>
<dbReference type="PDB" id="8IYJ">
    <property type="method" value="EM"/>
    <property type="resolution" value="3.50 A"/>
    <property type="chains" value="M1/M2/M3/M4=1-200"/>
</dbReference>
<dbReference type="PDBsum" id="8I7O"/>
<dbReference type="PDBsum" id="8I7R"/>
<dbReference type="PDBsum" id="8IYJ"/>
<dbReference type="EMDB" id="EMD-35229"/>
<dbReference type="EMDB" id="EMD-35230"/>
<dbReference type="EMDB" id="EMD-35823"/>
<dbReference type="SMR" id="Q9DAS2"/>
<dbReference type="STRING" id="10090.ENSMUSP00000031078"/>
<dbReference type="iPTMnet" id="Q9DAS2"/>
<dbReference type="PhosphoSitePlus" id="Q9DAS2"/>
<dbReference type="PaxDb" id="10090-ENSMUSP00000031078"/>
<dbReference type="Antibodypedia" id="67330">
    <property type="antibodies" value="18 antibodies from 7 providers"/>
</dbReference>
<dbReference type="DNASU" id="75434"/>
<dbReference type="Ensembl" id="ENSMUST00000031078.10">
    <molecule id="Q9DAS2-1"/>
    <property type="protein sequence ID" value="ENSMUSP00000031078.4"/>
    <property type="gene ID" value="ENSMUSG00000029182.11"/>
</dbReference>
<dbReference type="Ensembl" id="ENSMUST00000127815.2">
    <molecule id="Q9DAS2-2"/>
    <property type="protein sequence ID" value="ENSMUSP00000142635.2"/>
    <property type="gene ID" value="ENSMUSG00000029182.11"/>
</dbReference>
<dbReference type="GeneID" id="75434"/>
<dbReference type="KEGG" id="mmu:75434"/>
<dbReference type="UCSC" id="uc008wvm.1">
    <molecule id="Q9DAS2-2"/>
    <property type="organism name" value="mouse"/>
</dbReference>
<dbReference type="UCSC" id="uc008wvn.1">
    <molecule id="Q9DAS2-1"/>
    <property type="organism name" value="mouse"/>
</dbReference>
<dbReference type="AGR" id="MGI:1922684"/>
<dbReference type="CTD" id="339778"/>
<dbReference type="MGI" id="MGI:1922684">
    <property type="gene designation" value="Cimip2c"/>
</dbReference>
<dbReference type="VEuPathDB" id="HostDB:ENSMUSG00000029182"/>
<dbReference type="eggNOG" id="ENOG502S0NQ">
    <property type="taxonomic scope" value="Eukaryota"/>
</dbReference>
<dbReference type="GeneTree" id="ENSGT00390000018634"/>
<dbReference type="HOGENOM" id="CLU_118165_0_0_1"/>
<dbReference type="InParanoid" id="Q9DAS2"/>
<dbReference type="OMA" id="RQKRDCY"/>
<dbReference type="OrthoDB" id="8181742at2759"/>
<dbReference type="PhylomeDB" id="Q9DAS2"/>
<dbReference type="TreeFam" id="TF329317"/>
<dbReference type="BioGRID-ORCS" id="75434">
    <property type="hits" value="1 hit in 79 CRISPR screens"/>
</dbReference>
<dbReference type="PRO" id="PR:Q9DAS2"/>
<dbReference type="Proteomes" id="UP000000589">
    <property type="component" value="Chromosome 5"/>
</dbReference>
<dbReference type="RNAct" id="Q9DAS2">
    <property type="molecule type" value="protein"/>
</dbReference>
<dbReference type="Bgee" id="ENSMUSG00000029182">
    <property type="expression patterns" value="Expressed in seminiferous tubule of testis and 51 other cell types or tissues"/>
</dbReference>
<dbReference type="ExpressionAtlas" id="Q9DAS2">
    <property type="expression patterns" value="baseline and differential"/>
</dbReference>
<dbReference type="GO" id="GO:0160111">
    <property type="term" value="C:axonemal A tubule inner sheath"/>
    <property type="evidence" value="ECO:0000314"/>
    <property type="project" value="UniProtKB"/>
</dbReference>
<dbReference type="GO" id="GO:0005879">
    <property type="term" value="C:axonemal microtubule"/>
    <property type="evidence" value="ECO:0000250"/>
    <property type="project" value="UniProtKB"/>
</dbReference>
<dbReference type="GO" id="GO:0036126">
    <property type="term" value="C:sperm flagellum"/>
    <property type="evidence" value="ECO:0000314"/>
    <property type="project" value="UniProtKB"/>
</dbReference>
<dbReference type="GO" id="GO:0030317">
    <property type="term" value="P:flagellated sperm motility"/>
    <property type="evidence" value="ECO:0000314"/>
    <property type="project" value="UniProtKB"/>
</dbReference>
<dbReference type="InterPro" id="IPR052329">
    <property type="entry name" value="CIMIP2C"/>
</dbReference>
<dbReference type="InterPro" id="IPR018902">
    <property type="entry name" value="CMI2A-C-like_dom"/>
</dbReference>
<dbReference type="PANTHER" id="PTHR34924:SF1">
    <property type="entry name" value="PROTEIN FAM166C"/>
    <property type="match status" value="1"/>
</dbReference>
<dbReference type="PANTHER" id="PTHR34924">
    <property type="entry name" value="UPF0573 PROTEIN C2ORF70"/>
    <property type="match status" value="1"/>
</dbReference>
<dbReference type="Pfam" id="PF10629">
    <property type="entry name" value="CMI2B-like"/>
    <property type="match status" value="1"/>
</dbReference>
<organism>
    <name type="scientific">Mus musculus</name>
    <name type="common">Mouse</name>
    <dbReference type="NCBI Taxonomy" id="10090"/>
    <lineage>
        <taxon>Eukaryota</taxon>
        <taxon>Metazoa</taxon>
        <taxon>Chordata</taxon>
        <taxon>Craniata</taxon>
        <taxon>Vertebrata</taxon>
        <taxon>Euteleostomi</taxon>
        <taxon>Mammalia</taxon>
        <taxon>Eutheria</taxon>
        <taxon>Euarchontoglires</taxon>
        <taxon>Glires</taxon>
        <taxon>Rodentia</taxon>
        <taxon>Myomorpha</taxon>
        <taxon>Muroidea</taxon>
        <taxon>Muridae</taxon>
        <taxon>Murinae</taxon>
        <taxon>Mus</taxon>
        <taxon>Mus</taxon>
    </lineage>
</organism>
<keyword id="KW-0002">3D-structure</keyword>
<keyword id="KW-0025">Alternative splicing</keyword>
<keyword id="KW-0966">Cell projection</keyword>
<keyword id="KW-0969">Cilium</keyword>
<keyword id="KW-0963">Cytoplasm</keyword>
<keyword id="KW-0206">Cytoskeleton</keyword>
<keyword id="KW-0282">Flagellum</keyword>
<keyword id="KW-1185">Reference proteome</keyword>
<protein>
    <recommendedName>
        <fullName>Ciliary microtubule inner protein 2C</fullName>
    </recommendedName>
</protein>
<feature type="chain" id="PRO_0000332278" description="Ciliary microtubule inner protein 2C">
    <location>
        <begin position="1"/>
        <end position="200"/>
    </location>
</feature>
<feature type="splice variant" id="VSP_033372" description="In isoform 2." evidence="4">
    <original>TV</original>
    <variation>VS</variation>
    <location>
        <begin position="116"/>
        <end position="117"/>
    </location>
</feature>
<feature type="splice variant" id="VSP_033373" description="In isoform 2." evidence="4">
    <location>
        <begin position="118"/>
        <end position="200"/>
    </location>
</feature>
<name>CMI2C_MOUSE</name>
<evidence type="ECO:0000250" key="1">
    <source>
        <dbReference type="UniProtKB" id="A6NJV1"/>
    </source>
</evidence>
<evidence type="ECO:0000269" key="2">
    <source>
    </source>
</evidence>
<evidence type="ECO:0000269" key="3">
    <source>
    </source>
</evidence>
<evidence type="ECO:0000303" key="4">
    <source>
    </source>
</evidence>
<evidence type="ECO:0000303" key="5">
    <source>
    </source>
</evidence>
<evidence type="ECO:0000305" key="6"/>
<evidence type="ECO:0007744" key="7">
    <source>
        <dbReference type="PDB" id="8I7O"/>
    </source>
</evidence>
<evidence type="ECO:0007744" key="8">
    <source>
        <dbReference type="PDB" id="8I7R"/>
    </source>
</evidence>
<evidence type="ECO:0007744" key="9">
    <source>
        <dbReference type="PDB" id="8IYJ"/>
    </source>
</evidence>